<name>NANE_ENT38</name>
<protein>
    <recommendedName>
        <fullName evidence="1">Putative N-acetylmannosamine-6-phosphate 2-epimerase</fullName>
        <ecNumber evidence="1">5.1.3.9</ecNumber>
    </recommendedName>
    <alternativeName>
        <fullName evidence="1">ManNAc-6-P epimerase</fullName>
    </alternativeName>
</protein>
<proteinExistence type="inferred from homology"/>
<gene>
    <name evidence="1" type="primary">nanE</name>
    <name type="ordered locus">Ent638_3230</name>
</gene>
<sequence length="235" mass="24946">MKTVLDVLKGKLIVSCQALENEPLHSPFIMSRMALAAAQGGAAAIRANSVVDIAAIKQQVSLPVIGIIKRDYPGSEVFITATLKEIDELMTVNPEIIALDATARPRPNGQTLESFVGQIRARYPSVLLMADIATLAEAKEAQALGFDCVGTTLYGYTAETQGHSLPENDCEFLRDVVAAVSIPVVAEGNVDTPERAARCLALGAHTVVVGGAITRPQQITTRFVAAIEAHSIDRA</sequence>
<keyword id="KW-0119">Carbohydrate metabolism</keyword>
<keyword id="KW-0413">Isomerase</keyword>
<reference key="1">
    <citation type="journal article" date="2010" name="PLoS Genet.">
        <title>Genome sequence of the plant growth promoting endophytic bacterium Enterobacter sp. 638.</title>
        <authorList>
            <person name="Taghavi S."/>
            <person name="van der Lelie D."/>
            <person name="Hoffman A."/>
            <person name="Zhang Y.B."/>
            <person name="Walla M.D."/>
            <person name="Vangronsveld J."/>
            <person name="Newman L."/>
            <person name="Monchy S."/>
        </authorList>
    </citation>
    <scope>NUCLEOTIDE SEQUENCE [LARGE SCALE GENOMIC DNA]</scope>
    <source>
        <strain>638</strain>
    </source>
</reference>
<accession>A4WDW4</accession>
<organism>
    <name type="scientific">Enterobacter sp. (strain 638)</name>
    <dbReference type="NCBI Taxonomy" id="399742"/>
    <lineage>
        <taxon>Bacteria</taxon>
        <taxon>Pseudomonadati</taxon>
        <taxon>Pseudomonadota</taxon>
        <taxon>Gammaproteobacteria</taxon>
        <taxon>Enterobacterales</taxon>
        <taxon>Enterobacteriaceae</taxon>
        <taxon>Enterobacter</taxon>
    </lineage>
</organism>
<feature type="chain" id="PRO_1000066915" description="Putative N-acetylmannosamine-6-phosphate 2-epimerase">
    <location>
        <begin position="1"/>
        <end position="235"/>
    </location>
</feature>
<evidence type="ECO:0000255" key="1">
    <source>
        <dbReference type="HAMAP-Rule" id="MF_01235"/>
    </source>
</evidence>
<dbReference type="EC" id="5.1.3.9" evidence="1"/>
<dbReference type="EMBL" id="CP000653">
    <property type="protein sequence ID" value="ABP61894.1"/>
    <property type="molecule type" value="Genomic_DNA"/>
</dbReference>
<dbReference type="RefSeq" id="WP_015960223.1">
    <property type="nucleotide sequence ID" value="NC_009436.1"/>
</dbReference>
<dbReference type="SMR" id="A4WDW4"/>
<dbReference type="STRING" id="399742.Ent638_3230"/>
<dbReference type="KEGG" id="ent:Ent638_3230"/>
<dbReference type="eggNOG" id="COG3010">
    <property type="taxonomic scope" value="Bacteria"/>
</dbReference>
<dbReference type="HOGENOM" id="CLU_086300_1_0_6"/>
<dbReference type="OrthoDB" id="9810372at2"/>
<dbReference type="UniPathway" id="UPA00629">
    <property type="reaction ID" value="UER00682"/>
</dbReference>
<dbReference type="Proteomes" id="UP000000230">
    <property type="component" value="Chromosome"/>
</dbReference>
<dbReference type="GO" id="GO:0005829">
    <property type="term" value="C:cytosol"/>
    <property type="evidence" value="ECO:0007669"/>
    <property type="project" value="TreeGrafter"/>
</dbReference>
<dbReference type="GO" id="GO:0047465">
    <property type="term" value="F:N-acylglucosamine-6-phosphate 2-epimerase activity"/>
    <property type="evidence" value="ECO:0007669"/>
    <property type="project" value="UniProtKB-EC"/>
</dbReference>
<dbReference type="GO" id="GO:0005975">
    <property type="term" value="P:carbohydrate metabolic process"/>
    <property type="evidence" value="ECO:0007669"/>
    <property type="project" value="UniProtKB-UniRule"/>
</dbReference>
<dbReference type="GO" id="GO:0006053">
    <property type="term" value="P:N-acetylmannosamine catabolic process"/>
    <property type="evidence" value="ECO:0007669"/>
    <property type="project" value="TreeGrafter"/>
</dbReference>
<dbReference type="GO" id="GO:0019262">
    <property type="term" value="P:N-acetylneuraminate catabolic process"/>
    <property type="evidence" value="ECO:0007669"/>
    <property type="project" value="UniProtKB-UniRule"/>
</dbReference>
<dbReference type="CDD" id="cd04729">
    <property type="entry name" value="NanE"/>
    <property type="match status" value="1"/>
</dbReference>
<dbReference type="FunFam" id="3.20.20.70:FF:000035">
    <property type="entry name" value="Putative N-acetylmannosamine-6-phosphate 2-epimerase"/>
    <property type="match status" value="1"/>
</dbReference>
<dbReference type="Gene3D" id="3.20.20.70">
    <property type="entry name" value="Aldolase class I"/>
    <property type="match status" value="1"/>
</dbReference>
<dbReference type="HAMAP" id="MF_01235">
    <property type="entry name" value="ManNAc6P_epimer"/>
    <property type="match status" value="1"/>
</dbReference>
<dbReference type="InterPro" id="IPR013785">
    <property type="entry name" value="Aldolase_TIM"/>
</dbReference>
<dbReference type="InterPro" id="IPR007260">
    <property type="entry name" value="NanE"/>
</dbReference>
<dbReference type="InterPro" id="IPR011060">
    <property type="entry name" value="RibuloseP-bd_barrel"/>
</dbReference>
<dbReference type="NCBIfam" id="NF002231">
    <property type="entry name" value="PRK01130.1"/>
    <property type="match status" value="1"/>
</dbReference>
<dbReference type="PANTHER" id="PTHR36204">
    <property type="entry name" value="N-ACETYLMANNOSAMINE-6-PHOSPHATE 2-EPIMERASE-RELATED"/>
    <property type="match status" value="1"/>
</dbReference>
<dbReference type="PANTHER" id="PTHR36204:SF1">
    <property type="entry name" value="N-ACETYLMANNOSAMINE-6-PHOSPHATE 2-EPIMERASE-RELATED"/>
    <property type="match status" value="1"/>
</dbReference>
<dbReference type="Pfam" id="PF04131">
    <property type="entry name" value="NanE"/>
    <property type="match status" value="1"/>
</dbReference>
<dbReference type="SUPFAM" id="SSF51366">
    <property type="entry name" value="Ribulose-phoshate binding barrel"/>
    <property type="match status" value="1"/>
</dbReference>
<comment type="function">
    <text evidence="1">Converts N-acetylmannosamine-6-phosphate (ManNAc-6-P) to N-acetylglucosamine-6-phosphate (GlcNAc-6-P).</text>
</comment>
<comment type="catalytic activity">
    <reaction evidence="1">
        <text>an N-acyl-D-glucosamine 6-phosphate = an N-acyl-D-mannosamine 6-phosphate</text>
        <dbReference type="Rhea" id="RHEA:23932"/>
        <dbReference type="ChEBI" id="CHEBI:57599"/>
        <dbReference type="ChEBI" id="CHEBI:57666"/>
        <dbReference type="EC" id="5.1.3.9"/>
    </reaction>
</comment>
<comment type="pathway">
    <text evidence="1">Amino-sugar metabolism; N-acetylneuraminate degradation; D-fructose 6-phosphate from N-acetylneuraminate: step 3/5.</text>
</comment>
<comment type="similarity">
    <text evidence="1">Belongs to the NanE family.</text>
</comment>